<dbReference type="EMBL" id="S47577">
    <property type="protein sequence ID" value="AAA11762.1"/>
    <property type="molecule type" value="mRNA"/>
</dbReference>
<dbReference type="EMBL" id="AK031171">
    <property type="protein sequence ID" value="BAC27288.1"/>
    <property type="molecule type" value="mRNA"/>
</dbReference>
<dbReference type="EMBL" id="AK088336">
    <property type="protein sequence ID" value="BAC40290.1"/>
    <property type="molecule type" value="mRNA"/>
</dbReference>
<dbReference type="EMBL" id="AK133819">
    <property type="protein sequence ID" value="BAE21861.1"/>
    <property type="molecule type" value="mRNA"/>
</dbReference>
<dbReference type="EMBL" id="AK145746">
    <property type="protein sequence ID" value="BAE26623.1"/>
    <property type="molecule type" value="mRNA"/>
</dbReference>
<dbReference type="EMBL" id="AK150869">
    <property type="protein sequence ID" value="BAE29920.1"/>
    <property type="molecule type" value="mRNA"/>
</dbReference>
<dbReference type="EMBL" id="AK153210">
    <property type="protein sequence ID" value="BAE31809.1"/>
    <property type="molecule type" value="mRNA"/>
</dbReference>
<dbReference type="EMBL" id="AL805963">
    <property type="status" value="NOT_ANNOTATED_CDS"/>
    <property type="molecule type" value="Genomic_DNA"/>
</dbReference>
<dbReference type="EMBL" id="BC047366">
    <property type="protein sequence ID" value="AAH47366.1"/>
    <property type="molecule type" value="mRNA"/>
</dbReference>
<dbReference type="EMBL" id="M86390">
    <property type="protein sequence ID" value="AAA39728.1"/>
    <property type="molecule type" value="mRNA"/>
</dbReference>
<dbReference type="CCDS" id="CCDS53139.1"/>
<dbReference type="RefSeq" id="NP_034963.2">
    <property type="nucleotide sequence ID" value="NM_010833.2"/>
</dbReference>
<dbReference type="PDB" id="4YL8">
    <property type="method" value="X-ray"/>
    <property type="resolution" value="1.50 A"/>
    <property type="chains" value="A=1-297"/>
</dbReference>
<dbReference type="PDBsum" id="4YL8"/>
<dbReference type="SMR" id="P26041"/>
<dbReference type="BioGRID" id="201534">
    <property type="interactions" value="56"/>
</dbReference>
<dbReference type="FunCoup" id="P26041">
    <property type="interactions" value="1307"/>
</dbReference>
<dbReference type="IntAct" id="P26041">
    <property type="interactions" value="22"/>
</dbReference>
<dbReference type="MINT" id="P26041"/>
<dbReference type="STRING" id="10090.ENSMUSP00000113071"/>
<dbReference type="CarbonylDB" id="P26041"/>
<dbReference type="GlyGen" id="P26041">
    <property type="glycosylation" value="2 sites, 1 N-linked glycan (1 site), 1 O-linked glycan (1 site)"/>
</dbReference>
<dbReference type="iPTMnet" id="P26041"/>
<dbReference type="PhosphoSitePlus" id="P26041"/>
<dbReference type="SwissPalm" id="P26041"/>
<dbReference type="CPTAC" id="non-CPTAC-3594"/>
<dbReference type="jPOST" id="P26041"/>
<dbReference type="PaxDb" id="10090-ENSMUSP00000113071"/>
<dbReference type="PeptideAtlas" id="P26041"/>
<dbReference type="ProteomicsDB" id="290094"/>
<dbReference type="Pumba" id="P26041"/>
<dbReference type="Antibodypedia" id="2774">
    <property type="antibodies" value="1024 antibodies from 42 providers"/>
</dbReference>
<dbReference type="DNASU" id="17698"/>
<dbReference type="Ensembl" id="ENSMUST00000117399.2">
    <property type="protein sequence ID" value="ENSMUSP00000113071.2"/>
    <property type="gene ID" value="ENSMUSG00000031207.17"/>
</dbReference>
<dbReference type="GeneID" id="17698"/>
<dbReference type="KEGG" id="mmu:17698"/>
<dbReference type="UCSC" id="uc009tug.1">
    <property type="organism name" value="mouse"/>
</dbReference>
<dbReference type="AGR" id="MGI:97167"/>
<dbReference type="CTD" id="4478"/>
<dbReference type="MGI" id="MGI:97167">
    <property type="gene designation" value="Msn"/>
</dbReference>
<dbReference type="VEuPathDB" id="HostDB:ENSMUSG00000031207"/>
<dbReference type="eggNOG" id="KOG3529">
    <property type="taxonomic scope" value="Eukaryota"/>
</dbReference>
<dbReference type="GeneTree" id="ENSGT01090000260082"/>
<dbReference type="HOGENOM" id="CLU_003623_6_2_1"/>
<dbReference type="InParanoid" id="P26041"/>
<dbReference type="OMA" id="EAMLWQQ"/>
<dbReference type="OrthoDB" id="6018897at2759"/>
<dbReference type="PhylomeDB" id="P26041"/>
<dbReference type="TreeFam" id="TF313935"/>
<dbReference type="Reactome" id="R-MMU-437239">
    <property type="pathway name" value="Recycling pathway of L1"/>
</dbReference>
<dbReference type="BioGRID-ORCS" id="17698">
    <property type="hits" value="4 hits in 78 CRISPR screens"/>
</dbReference>
<dbReference type="CD-CODE" id="CE726F99">
    <property type="entry name" value="Postsynaptic density"/>
</dbReference>
<dbReference type="ChiTaRS" id="Msn">
    <property type="organism name" value="mouse"/>
</dbReference>
<dbReference type="EvolutionaryTrace" id="P26041"/>
<dbReference type="PRO" id="PR:P26041"/>
<dbReference type="Proteomes" id="UP000000589">
    <property type="component" value="Chromosome X"/>
</dbReference>
<dbReference type="RNAct" id="P26041">
    <property type="molecule type" value="protein"/>
</dbReference>
<dbReference type="Bgee" id="ENSMUSG00000031207">
    <property type="expression patterns" value="Expressed in right lung and 248 other cell types or tissues"/>
</dbReference>
<dbReference type="GO" id="GO:0045177">
    <property type="term" value="C:apical part of cell"/>
    <property type="evidence" value="ECO:0000314"/>
    <property type="project" value="MGI"/>
</dbReference>
<dbReference type="GO" id="GO:0016324">
    <property type="term" value="C:apical plasma membrane"/>
    <property type="evidence" value="ECO:0000314"/>
    <property type="project" value="MGI"/>
</dbReference>
<dbReference type="GO" id="GO:0016323">
    <property type="term" value="C:basolateral plasma membrane"/>
    <property type="evidence" value="ECO:0000314"/>
    <property type="project" value="MGI"/>
</dbReference>
<dbReference type="GO" id="GO:0009986">
    <property type="term" value="C:cell surface"/>
    <property type="evidence" value="ECO:0007669"/>
    <property type="project" value="Ensembl"/>
</dbReference>
<dbReference type="GO" id="GO:0005856">
    <property type="term" value="C:cytoskeleton"/>
    <property type="evidence" value="ECO:0007669"/>
    <property type="project" value="UniProtKB-SubCell"/>
</dbReference>
<dbReference type="GO" id="GO:0005829">
    <property type="term" value="C:cytosol"/>
    <property type="evidence" value="ECO:0000304"/>
    <property type="project" value="Reactome"/>
</dbReference>
<dbReference type="GO" id="GO:0030175">
    <property type="term" value="C:filopodium"/>
    <property type="evidence" value="ECO:0007669"/>
    <property type="project" value="Ensembl"/>
</dbReference>
<dbReference type="GO" id="GO:0005925">
    <property type="term" value="C:focal adhesion"/>
    <property type="evidence" value="ECO:0007669"/>
    <property type="project" value="Ensembl"/>
</dbReference>
<dbReference type="GO" id="GO:0005902">
    <property type="term" value="C:microvillus"/>
    <property type="evidence" value="ECO:0000314"/>
    <property type="project" value="UniProtKB"/>
</dbReference>
<dbReference type="GO" id="GO:0031528">
    <property type="term" value="C:microvillus membrane"/>
    <property type="evidence" value="ECO:0007669"/>
    <property type="project" value="UniProtKB-SubCell"/>
</dbReference>
<dbReference type="GO" id="GO:0043209">
    <property type="term" value="C:myelin sheath"/>
    <property type="evidence" value="ECO:0007005"/>
    <property type="project" value="UniProtKB"/>
</dbReference>
<dbReference type="GO" id="GO:0048471">
    <property type="term" value="C:perinuclear region of cytoplasm"/>
    <property type="evidence" value="ECO:0007669"/>
    <property type="project" value="Ensembl"/>
</dbReference>
<dbReference type="GO" id="GO:0031143">
    <property type="term" value="C:pseudopodium"/>
    <property type="evidence" value="ECO:0007669"/>
    <property type="project" value="Ensembl"/>
</dbReference>
<dbReference type="GO" id="GO:0001931">
    <property type="term" value="C:uropod"/>
    <property type="evidence" value="ECO:0000314"/>
    <property type="project" value="MGI"/>
</dbReference>
<dbReference type="GO" id="GO:0003779">
    <property type="term" value="F:actin binding"/>
    <property type="evidence" value="ECO:0007669"/>
    <property type="project" value="InterPro"/>
</dbReference>
<dbReference type="GO" id="GO:0050839">
    <property type="term" value="F:cell adhesion molecule binding"/>
    <property type="evidence" value="ECO:0007669"/>
    <property type="project" value="Ensembl"/>
</dbReference>
<dbReference type="GO" id="GO:0003725">
    <property type="term" value="F:double-stranded RNA binding"/>
    <property type="evidence" value="ECO:0000266"/>
    <property type="project" value="MGI"/>
</dbReference>
<dbReference type="GO" id="GO:0019901">
    <property type="term" value="F:protein kinase binding"/>
    <property type="evidence" value="ECO:0007669"/>
    <property type="project" value="Ensembl"/>
</dbReference>
<dbReference type="GO" id="GO:0005102">
    <property type="term" value="F:signaling receptor binding"/>
    <property type="evidence" value="ECO:0007669"/>
    <property type="project" value="Ensembl"/>
</dbReference>
<dbReference type="GO" id="GO:0071394">
    <property type="term" value="P:cellular response to testosterone stimulus"/>
    <property type="evidence" value="ECO:0007669"/>
    <property type="project" value="Ensembl"/>
</dbReference>
<dbReference type="GO" id="GO:0061028">
    <property type="term" value="P:establishment of endothelial barrier"/>
    <property type="evidence" value="ECO:0007669"/>
    <property type="project" value="Ensembl"/>
</dbReference>
<dbReference type="GO" id="GO:0045198">
    <property type="term" value="P:establishment of epithelial cell apical/basal polarity"/>
    <property type="evidence" value="ECO:0007669"/>
    <property type="project" value="Ensembl"/>
</dbReference>
<dbReference type="GO" id="GO:0022612">
    <property type="term" value="P:gland morphogenesis"/>
    <property type="evidence" value="ECO:0007669"/>
    <property type="project" value="Ensembl"/>
</dbReference>
<dbReference type="GO" id="GO:0001771">
    <property type="term" value="P:immunological synapse formation"/>
    <property type="evidence" value="ECO:0000250"/>
    <property type="project" value="UniProtKB"/>
</dbReference>
<dbReference type="GO" id="GO:0022614">
    <property type="term" value="P:membrane to membrane docking"/>
    <property type="evidence" value="ECO:0007669"/>
    <property type="project" value="Ensembl"/>
</dbReference>
<dbReference type="GO" id="GO:2000643">
    <property type="term" value="P:positive regulation of early endosome to late endosome transport"/>
    <property type="evidence" value="ECO:0007669"/>
    <property type="project" value="Ensembl"/>
</dbReference>
<dbReference type="GO" id="GO:0010628">
    <property type="term" value="P:positive regulation of gene expression"/>
    <property type="evidence" value="ECO:0007669"/>
    <property type="project" value="Ensembl"/>
</dbReference>
<dbReference type="GO" id="GO:0071803">
    <property type="term" value="P:positive regulation of podosome assembly"/>
    <property type="evidence" value="ECO:0000314"/>
    <property type="project" value="MGI"/>
</dbReference>
<dbReference type="GO" id="GO:0045732">
    <property type="term" value="P:positive regulation of protein catabolic process"/>
    <property type="evidence" value="ECO:0007669"/>
    <property type="project" value="Ensembl"/>
</dbReference>
<dbReference type="GO" id="GO:1902966">
    <property type="term" value="P:positive regulation of protein localization to early endosome"/>
    <property type="evidence" value="ECO:0007669"/>
    <property type="project" value="Ensembl"/>
</dbReference>
<dbReference type="GO" id="GO:0008360">
    <property type="term" value="P:regulation of cell shape"/>
    <property type="evidence" value="ECO:0007669"/>
    <property type="project" value="Ensembl"/>
</dbReference>
<dbReference type="GO" id="GO:0008361">
    <property type="term" value="P:regulation of cell size"/>
    <property type="evidence" value="ECO:0007669"/>
    <property type="project" value="Ensembl"/>
</dbReference>
<dbReference type="GO" id="GO:2000401">
    <property type="term" value="P:regulation of lymphocyte migration"/>
    <property type="evidence" value="ECO:0007669"/>
    <property type="project" value="Ensembl"/>
</dbReference>
<dbReference type="GO" id="GO:0070489">
    <property type="term" value="P:T cell aggregation"/>
    <property type="evidence" value="ECO:0000250"/>
    <property type="project" value="UniProtKB"/>
</dbReference>
<dbReference type="GO" id="GO:0072678">
    <property type="term" value="P:T cell migration"/>
    <property type="evidence" value="ECO:0000250"/>
    <property type="project" value="UniProtKB"/>
</dbReference>
<dbReference type="GO" id="GO:0042098">
    <property type="term" value="P:T cell proliferation"/>
    <property type="evidence" value="ECO:0000250"/>
    <property type="project" value="UniProtKB"/>
</dbReference>
<dbReference type="CDD" id="cd14473">
    <property type="entry name" value="FERM_B-lobe"/>
    <property type="match status" value="1"/>
</dbReference>
<dbReference type="CDD" id="cd13194">
    <property type="entry name" value="FERM_C_ERM"/>
    <property type="match status" value="1"/>
</dbReference>
<dbReference type="CDD" id="cd17187">
    <property type="entry name" value="FERM_F1_ERM"/>
    <property type="match status" value="1"/>
</dbReference>
<dbReference type="FunFam" id="2.30.29.30:FF:000003">
    <property type="entry name" value="Radixin isoform 1"/>
    <property type="match status" value="1"/>
</dbReference>
<dbReference type="FunFam" id="1.20.80.10:FF:000002">
    <property type="entry name" value="radixin isoform X1"/>
    <property type="match status" value="1"/>
</dbReference>
<dbReference type="FunFam" id="3.10.20.90:FF:000013">
    <property type="entry name" value="radixin isoform X1"/>
    <property type="match status" value="1"/>
</dbReference>
<dbReference type="FunFam" id="1.20.5.450:FF:000001">
    <property type="entry name" value="radixin isoform X2"/>
    <property type="match status" value="1"/>
</dbReference>
<dbReference type="Gene3D" id="1.20.5.450">
    <property type="match status" value="1"/>
</dbReference>
<dbReference type="Gene3D" id="1.20.80.10">
    <property type="match status" value="1"/>
</dbReference>
<dbReference type="Gene3D" id="6.10.360.10">
    <property type="match status" value="1"/>
</dbReference>
<dbReference type="Gene3D" id="3.10.20.90">
    <property type="entry name" value="Phosphatidylinositol 3-kinase Catalytic Subunit, Chain A, domain 1"/>
    <property type="match status" value="1"/>
</dbReference>
<dbReference type="Gene3D" id="2.30.29.30">
    <property type="entry name" value="Pleckstrin-homology domain (PH domain)/Phosphotyrosine-binding domain (PTB)"/>
    <property type="match status" value="1"/>
</dbReference>
<dbReference type="InterPro" id="IPR019749">
    <property type="entry name" value="Band_41_domain"/>
</dbReference>
<dbReference type="InterPro" id="IPR011174">
    <property type="entry name" value="ERM"/>
</dbReference>
<dbReference type="InterPro" id="IPR011259">
    <property type="entry name" value="ERM_C_dom"/>
</dbReference>
<dbReference type="InterPro" id="IPR041789">
    <property type="entry name" value="ERM_FERM_C"/>
</dbReference>
<dbReference type="InterPro" id="IPR046810">
    <property type="entry name" value="ERM_helical"/>
</dbReference>
<dbReference type="InterPro" id="IPR000798">
    <property type="entry name" value="Ez/rad/moesin-like"/>
</dbReference>
<dbReference type="InterPro" id="IPR014352">
    <property type="entry name" value="FERM/acyl-CoA-bd_prot_sf"/>
</dbReference>
<dbReference type="InterPro" id="IPR035963">
    <property type="entry name" value="FERM_2"/>
</dbReference>
<dbReference type="InterPro" id="IPR019748">
    <property type="entry name" value="FERM_central"/>
</dbReference>
<dbReference type="InterPro" id="IPR019747">
    <property type="entry name" value="FERM_CS"/>
</dbReference>
<dbReference type="InterPro" id="IPR000299">
    <property type="entry name" value="FERM_domain"/>
</dbReference>
<dbReference type="InterPro" id="IPR018979">
    <property type="entry name" value="FERM_N"/>
</dbReference>
<dbReference type="InterPro" id="IPR018980">
    <property type="entry name" value="FERM_PH-like_C"/>
</dbReference>
<dbReference type="InterPro" id="IPR008954">
    <property type="entry name" value="Moesin_tail_sf"/>
</dbReference>
<dbReference type="InterPro" id="IPR011993">
    <property type="entry name" value="PH-like_dom_sf"/>
</dbReference>
<dbReference type="InterPro" id="IPR029071">
    <property type="entry name" value="Ubiquitin-like_domsf"/>
</dbReference>
<dbReference type="PANTHER" id="PTHR23281">
    <property type="entry name" value="MERLIN/MOESIN/EZRIN/RADIXIN"/>
    <property type="match status" value="1"/>
</dbReference>
<dbReference type="Pfam" id="PF00769">
    <property type="entry name" value="ERM_C"/>
    <property type="match status" value="1"/>
</dbReference>
<dbReference type="Pfam" id="PF20492">
    <property type="entry name" value="ERM_helical"/>
    <property type="match status" value="1"/>
</dbReference>
<dbReference type="Pfam" id="PF09380">
    <property type="entry name" value="FERM_C"/>
    <property type="match status" value="1"/>
</dbReference>
<dbReference type="Pfam" id="PF00373">
    <property type="entry name" value="FERM_M"/>
    <property type="match status" value="1"/>
</dbReference>
<dbReference type="Pfam" id="PF09379">
    <property type="entry name" value="FERM_N"/>
    <property type="match status" value="1"/>
</dbReference>
<dbReference type="PIRSF" id="PIRSF002305">
    <property type="entry name" value="ERM"/>
    <property type="match status" value="1"/>
</dbReference>
<dbReference type="PRINTS" id="PR00935">
    <property type="entry name" value="BAND41"/>
</dbReference>
<dbReference type="PRINTS" id="PR00661">
    <property type="entry name" value="ERMFAMILY"/>
</dbReference>
<dbReference type="SMART" id="SM00295">
    <property type="entry name" value="B41"/>
    <property type="match status" value="1"/>
</dbReference>
<dbReference type="SMART" id="SM01196">
    <property type="entry name" value="FERM_C"/>
    <property type="match status" value="1"/>
</dbReference>
<dbReference type="SUPFAM" id="SSF48678">
    <property type="entry name" value="Moesin tail domain"/>
    <property type="match status" value="1"/>
</dbReference>
<dbReference type="SUPFAM" id="SSF50729">
    <property type="entry name" value="PH domain-like"/>
    <property type="match status" value="1"/>
</dbReference>
<dbReference type="SUPFAM" id="SSF47031">
    <property type="entry name" value="Second domain of FERM"/>
    <property type="match status" value="1"/>
</dbReference>
<dbReference type="SUPFAM" id="SSF54236">
    <property type="entry name" value="Ubiquitin-like"/>
    <property type="match status" value="1"/>
</dbReference>
<dbReference type="PROSITE" id="PS00660">
    <property type="entry name" value="FERM_1"/>
    <property type="match status" value="1"/>
</dbReference>
<dbReference type="PROSITE" id="PS00661">
    <property type="entry name" value="FERM_2"/>
    <property type="match status" value="1"/>
</dbReference>
<dbReference type="PROSITE" id="PS50057">
    <property type="entry name" value="FERM_3"/>
    <property type="match status" value="1"/>
</dbReference>
<proteinExistence type="evidence at protein level"/>
<name>MOES_MOUSE</name>
<feature type="chain" id="PRO_0000219417" description="Moesin">
    <location>
        <begin position="1"/>
        <end position="577"/>
    </location>
</feature>
<feature type="domain" description="FERM" evidence="4">
    <location>
        <begin position="2"/>
        <end position="295"/>
    </location>
</feature>
<feature type="region of interest" description="Disordered" evidence="5">
    <location>
        <begin position="322"/>
        <end position="342"/>
    </location>
</feature>
<feature type="region of interest" description="Disordered" evidence="5">
    <location>
        <begin position="358"/>
        <end position="419"/>
    </location>
</feature>
<feature type="region of interest" description="Disordered" evidence="5">
    <location>
        <begin position="468"/>
        <end position="518"/>
    </location>
</feature>
<feature type="short sequence motif" description="[IL]-x-C-x-x-[DE] motif" evidence="2">
    <location>
        <begin position="115"/>
        <end position="120"/>
    </location>
</feature>
<feature type="compositionally biased region" description="Basic and acidic residues" evidence="5">
    <location>
        <begin position="358"/>
        <end position="401"/>
    </location>
</feature>
<feature type="compositionally biased region" description="Basic and acidic residues" evidence="5">
    <location>
        <begin position="492"/>
        <end position="518"/>
    </location>
</feature>
<feature type="modified residue" description="Phosphoserine" evidence="2">
    <location>
        <position position="74"/>
    </location>
</feature>
<feature type="modified residue" description="N6-acetyllysine" evidence="2">
    <location>
        <position position="79"/>
    </location>
</feature>
<feature type="modified residue" description="N6-succinyllysine" evidence="3">
    <location>
        <position position="83"/>
    </location>
</feature>
<feature type="modified residue" description="Phosphotyrosine" evidence="17">
    <location>
        <position position="116"/>
    </location>
</feature>
<feature type="modified residue" description="S-nitrosocysteine" evidence="2">
    <location>
        <position position="117"/>
    </location>
</feature>
<feature type="modified residue" description="N6-acetyllysine" evidence="2">
    <location>
        <position position="139"/>
    </location>
</feature>
<feature type="modified residue" description="N6-acetyllysine" evidence="19">
    <location>
        <position position="165"/>
    </location>
</feature>
<feature type="modified residue" description="Phosphoserine" evidence="2">
    <location>
        <position position="407"/>
    </location>
</feature>
<feature type="modified residue" description="Phosphoserine" evidence="18">
    <location>
        <position position="527"/>
    </location>
</feature>
<feature type="modified residue" description="Phosphothreonine; by ROCK2 and STK10" evidence="10 12">
    <location>
        <position position="558"/>
    </location>
</feature>
<feature type="mutagenesis site" description="Diminishes the number of microvilli-like structures." evidence="12">
    <original>T</original>
    <variation>A</variation>
    <location>
        <position position="558"/>
    </location>
</feature>
<feature type="mutagenesis site" description="No effect on microvilli-like structures." evidence="12">
    <original>T</original>
    <variation>D</variation>
    <location>
        <position position="558"/>
    </location>
</feature>
<feature type="sequence conflict" description="In Ref. 5; AAA39728." evidence="15" ref="5">
    <original>EL</original>
    <variation>DV</variation>
    <location>
        <begin position="331"/>
        <end position="332"/>
    </location>
</feature>
<feature type="sequence conflict" description="In Ref. 5; AAA39728." evidence="15" ref="5">
    <original>RA</original>
    <variation>SP</variation>
    <location>
        <begin position="371"/>
        <end position="372"/>
    </location>
</feature>
<feature type="strand" evidence="20">
    <location>
        <begin position="3"/>
        <end position="10"/>
    </location>
</feature>
<feature type="strand" evidence="20">
    <location>
        <begin position="15"/>
        <end position="20"/>
    </location>
</feature>
<feature type="helix" evidence="20">
    <location>
        <begin position="26"/>
        <end position="37"/>
    </location>
</feature>
<feature type="helix" evidence="20">
    <location>
        <begin position="42"/>
        <end position="44"/>
    </location>
</feature>
<feature type="strand" evidence="20">
    <location>
        <begin position="45"/>
        <end position="51"/>
    </location>
</feature>
<feature type="strand" evidence="20">
    <location>
        <begin position="56"/>
        <end position="58"/>
    </location>
</feature>
<feature type="helix" evidence="20">
    <location>
        <begin position="65"/>
        <end position="67"/>
    </location>
</feature>
<feature type="strand" evidence="20">
    <location>
        <begin position="74"/>
        <end position="84"/>
    </location>
</feature>
<feature type="helix" evidence="20">
    <location>
        <begin position="89"/>
        <end position="92"/>
    </location>
</feature>
<feature type="helix" evidence="20">
    <location>
        <begin position="96"/>
        <end position="111"/>
    </location>
</feature>
<feature type="helix" evidence="20">
    <location>
        <begin position="119"/>
        <end position="134"/>
    </location>
</feature>
<feature type="turn" evidence="20">
    <location>
        <begin position="139"/>
        <end position="141"/>
    </location>
</feature>
<feature type="turn" evidence="20">
    <location>
        <begin position="144"/>
        <end position="149"/>
    </location>
</feature>
<feature type="helix" evidence="20">
    <location>
        <begin position="155"/>
        <end position="160"/>
    </location>
</feature>
<feature type="helix" evidence="20">
    <location>
        <begin position="165"/>
        <end position="178"/>
    </location>
</feature>
<feature type="turn" evidence="20">
    <location>
        <begin position="179"/>
        <end position="181"/>
    </location>
</feature>
<feature type="helix" evidence="20">
    <location>
        <begin position="184"/>
        <end position="195"/>
    </location>
</feature>
<feature type="turn" evidence="20">
    <location>
        <begin position="199"/>
        <end position="202"/>
    </location>
</feature>
<feature type="strand" evidence="20">
    <location>
        <begin position="204"/>
        <end position="209"/>
    </location>
</feature>
<feature type="strand" evidence="20">
    <location>
        <begin position="215"/>
        <end position="221"/>
    </location>
</feature>
<feature type="strand" evidence="20">
    <location>
        <begin position="224"/>
        <end position="229"/>
    </location>
</feature>
<feature type="strand" evidence="20">
    <location>
        <begin position="233"/>
        <end position="235"/>
    </location>
</feature>
<feature type="strand" evidence="20">
    <location>
        <begin position="237"/>
        <end position="241"/>
    </location>
</feature>
<feature type="helix" evidence="20">
    <location>
        <begin position="242"/>
        <end position="244"/>
    </location>
</feature>
<feature type="strand" evidence="20">
    <location>
        <begin position="245"/>
        <end position="251"/>
    </location>
</feature>
<feature type="strand" evidence="20">
    <location>
        <begin position="254"/>
        <end position="261"/>
    </location>
</feature>
<feature type="strand" evidence="20">
    <location>
        <begin position="267"/>
        <end position="270"/>
    </location>
</feature>
<feature type="helix" evidence="20">
    <location>
        <begin position="274"/>
        <end position="294"/>
    </location>
</feature>
<comment type="function">
    <text evidence="2 7 8">Ezrin-radixin-moesin (ERM) family protein that connects the actin cytoskeleton to the plasma membrane and thereby regulates the structure and function of specific domains of the cell cortex. Tethers actin filaments by oscillating between a resting and an activated state providing transient interactions between moesin and the actin cytoskeleton (By similarity). Once phosphorylated on its C-terminal threonine, moesin is activated leading to interaction with F-actin and cytoskeletal rearrangement (By similarity). These rearrangements regulate many cellular processes, including cell shape determination, membrane transport, and signal transduction (By similarity). The role of moesin is particularly important in immunity acting on both T and B-cells homeostasis and self-tolerance, regulating lymphocyte egress from lymphoid organs (PubMed:22875842). Modulates phagolysosomal biogenesis in macrophages (PubMed:28978692). Also participates in immunologic synapse formation (By similarity).</text>
</comment>
<comment type="subunit">
    <text evidence="2 6 9 11">In resting T-cells, part of a PAG1-NHERF1-MSN complex which is disrupted upon TCR activation (PubMed:11777944). Interacts with NHERF1 (PubMed:11777944). Interacts with PPP1R16B (By similarity). Interacts with SELPLG and SYK; these interactions mediate the activation of SYK by SELPLG (By similarity). Interacts with PDPN (via cytoplasmic domain); this interaction activates RHOA and promotes epithelial-mesenchymal transition (By similarity). Interacts with SPN/CD43 cytoplasmic tail (PubMed:9472040). Interacts with CD44 (PubMed:9472040). Interacts with ICAM2 (PubMed:9472040). Interacts with ICAM3 (via C-terminus) (By similarity). Interacts with PDZD8 (By similarity). Interacts with F-actin (By similarity). Interacts with CD46 (By similarity). Interacts with PTPN6 (PubMed:29247647).</text>
</comment>
<comment type="subcellular location">
    <subcellularLocation>
        <location evidence="12">Cell membrane</location>
        <topology evidence="12">Peripheral membrane protein</topology>
        <orientation evidence="12">Cytoplasmic side</orientation>
    </subcellularLocation>
    <subcellularLocation>
        <location evidence="12">Cytoplasm</location>
        <location evidence="12">Cytoskeleton</location>
    </subcellularLocation>
    <subcellularLocation>
        <location evidence="12">Apical cell membrane</location>
        <topology evidence="12">Peripheral membrane protein</topology>
        <orientation evidence="12">Cytoplasmic side</orientation>
    </subcellularLocation>
    <subcellularLocation>
        <location evidence="12">Cell projection</location>
        <location evidence="12">Microvillus membrane</location>
        <topology evidence="12">Peripheral membrane protein</topology>
        <orientation evidence="12">Cytoplasmic side</orientation>
    </subcellularLocation>
    <subcellularLocation>
        <location evidence="11">Cell projection</location>
        <location evidence="11">Microvillus</location>
    </subcellularLocation>
    <text evidence="2 12">Phosphorylated form is enriched in microvilli-like structures at apical membrane. Increased cell membrane localization of both phosphorylated and non-phosphorylated forms seen after thrombin treatment (By similarity). Localizes at the uropods of T lymphoblasts (By similarity).</text>
</comment>
<comment type="domain">
    <text evidence="2">The [IL]-x-C-x-x-[DE] motif is a proposed target motif for cysteine S-nitrosylation mediated by the iNOS-S100A8/A9 transnitrosylase complex.</text>
</comment>
<comment type="PTM">
    <text evidence="1 10 12">Phosphorylation on Thr-558 by STK10 negatively regulates lymphocyte migration and polarization (By similarity). Phosphorylation on Thr-558 is crucial for the formation of microvilli-like structures. Phosphorylation by ROCK2 suppresses the head-to-tail association of the N-terminal and C-terminal halves resulting in an opened conformation which is capable of actin and membrane-binding.</text>
</comment>
<comment type="PTM">
    <text evidence="2">S-nitrosylation of Cys-117 is induced by interferon-gamma and oxidatively-modified low-densitity lipoprotein (LDL(ox)) implicating the iNOS-S100A8/9 transnitrosylase complex.</text>
</comment>
<comment type="disruption phenotype">
    <text evidence="7 8 13">Moesin-deficient mice exhibit no obvious abnormalities in appearance or fertility, but display altered humoral immune responses.</text>
</comment>
<keyword id="KW-0002">3D-structure</keyword>
<keyword id="KW-0007">Acetylation</keyword>
<keyword id="KW-1003">Cell membrane</keyword>
<keyword id="KW-0966">Cell projection</keyword>
<keyword id="KW-0963">Cytoplasm</keyword>
<keyword id="KW-0206">Cytoskeleton</keyword>
<keyword id="KW-0472">Membrane</keyword>
<keyword id="KW-0597">Phosphoprotein</keyword>
<keyword id="KW-1185">Reference proteome</keyword>
<keyword id="KW-0702">S-nitrosylation</keyword>
<evidence type="ECO:0000250" key="1"/>
<evidence type="ECO:0000250" key="2">
    <source>
        <dbReference type="UniProtKB" id="P26038"/>
    </source>
</evidence>
<evidence type="ECO:0000250" key="3">
    <source>
        <dbReference type="UniProtKB" id="P26043"/>
    </source>
</evidence>
<evidence type="ECO:0000255" key="4">
    <source>
        <dbReference type="PROSITE-ProRule" id="PRU00084"/>
    </source>
</evidence>
<evidence type="ECO:0000256" key="5">
    <source>
        <dbReference type="SAM" id="MobiDB-lite"/>
    </source>
</evidence>
<evidence type="ECO:0000269" key="6">
    <source>
    </source>
</evidence>
<evidence type="ECO:0000269" key="7">
    <source>
    </source>
</evidence>
<evidence type="ECO:0000269" key="8">
    <source>
    </source>
</evidence>
<evidence type="ECO:0000269" key="9">
    <source>
    </source>
</evidence>
<evidence type="ECO:0000269" key="10">
    <source>
    </source>
</evidence>
<evidence type="ECO:0000269" key="11">
    <source>
    </source>
</evidence>
<evidence type="ECO:0000269" key="12">
    <source>
    </source>
</evidence>
<evidence type="ECO:0000269" key="13">
    <source>
    </source>
</evidence>
<evidence type="ECO:0000303" key="14">
    <source>
    </source>
</evidence>
<evidence type="ECO:0000305" key="15"/>
<evidence type="ECO:0000312" key="16">
    <source>
        <dbReference type="MGI" id="MGI:97167"/>
    </source>
</evidence>
<evidence type="ECO:0007744" key="17">
    <source>
    </source>
</evidence>
<evidence type="ECO:0007744" key="18">
    <source>
    </source>
</evidence>
<evidence type="ECO:0007744" key="19">
    <source>
    </source>
</evidence>
<evidence type="ECO:0007829" key="20">
    <source>
        <dbReference type="PDB" id="4YL8"/>
    </source>
</evidence>
<accession>P26041</accession>
<accession>B1AX70</accession>
<accession>Q3UL28</accession>
<accession>Q8BSN4</accession>
<protein>
    <recommendedName>
        <fullName evidence="14">Moesin</fullName>
    </recommendedName>
    <alternativeName>
        <fullName>Membrane-organizing extension spike protein</fullName>
    </alternativeName>
</protein>
<organism>
    <name type="scientific">Mus musculus</name>
    <name type="common">Mouse</name>
    <dbReference type="NCBI Taxonomy" id="10090"/>
    <lineage>
        <taxon>Eukaryota</taxon>
        <taxon>Metazoa</taxon>
        <taxon>Chordata</taxon>
        <taxon>Craniata</taxon>
        <taxon>Vertebrata</taxon>
        <taxon>Euteleostomi</taxon>
        <taxon>Mammalia</taxon>
        <taxon>Eutheria</taxon>
        <taxon>Euarchontoglires</taxon>
        <taxon>Glires</taxon>
        <taxon>Rodentia</taxon>
        <taxon>Myomorpha</taxon>
        <taxon>Muroidea</taxon>
        <taxon>Muridae</taxon>
        <taxon>Murinae</taxon>
        <taxon>Mus</taxon>
        <taxon>Mus</taxon>
    </lineage>
</organism>
<reference key="1">
    <citation type="journal article" date="1992" name="J. Cell Sci.">
        <title>A gene family consisting of ezrin, radixin and moesin. Its specific localization at actin filament/plasma membrane association sites.</title>
        <authorList>
            <person name="Sato N."/>
            <person name="Funayama N."/>
            <person name="Nagafuchi A."/>
            <person name="Yonemura S."/>
            <person name="Tsukita S."/>
            <person name="Tsukita S."/>
        </authorList>
    </citation>
    <scope>NUCLEOTIDE SEQUENCE [MRNA]</scope>
</reference>
<reference key="2">
    <citation type="journal article" date="2005" name="Science">
        <title>The transcriptional landscape of the mammalian genome.</title>
        <authorList>
            <person name="Carninci P."/>
            <person name="Kasukawa T."/>
            <person name="Katayama S."/>
            <person name="Gough J."/>
            <person name="Frith M.C."/>
            <person name="Maeda N."/>
            <person name="Oyama R."/>
            <person name="Ravasi T."/>
            <person name="Lenhard B."/>
            <person name="Wells C."/>
            <person name="Kodzius R."/>
            <person name="Shimokawa K."/>
            <person name="Bajic V.B."/>
            <person name="Brenner S.E."/>
            <person name="Batalov S."/>
            <person name="Forrest A.R."/>
            <person name="Zavolan M."/>
            <person name="Davis M.J."/>
            <person name="Wilming L.G."/>
            <person name="Aidinis V."/>
            <person name="Allen J.E."/>
            <person name="Ambesi-Impiombato A."/>
            <person name="Apweiler R."/>
            <person name="Aturaliya R.N."/>
            <person name="Bailey T.L."/>
            <person name="Bansal M."/>
            <person name="Baxter L."/>
            <person name="Beisel K.W."/>
            <person name="Bersano T."/>
            <person name="Bono H."/>
            <person name="Chalk A.M."/>
            <person name="Chiu K.P."/>
            <person name="Choudhary V."/>
            <person name="Christoffels A."/>
            <person name="Clutterbuck D.R."/>
            <person name="Crowe M.L."/>
            <person name="Dalla E."/>
            <person name="Dalrymple B.P."/>
            <person name="de Bono B."/>
            <person name="Della Gatta G."/>
            <person name="di Bernardo D."/>
            <person name="Down T."/>
            <person name="Engstrom P."/>
            <person name="Fagiolini M."/>
            <person name="Faulkner G."/>
            <person name="Fletcher C.F."/>
            <person name="Fukushima T."/>
            <person name="Furuno M."/>
            <person name="Futaki S."/>
            <person name="Gariboldi M."/>
            <person name="Georgii-Hemming P."/>
            <person name="Gingeras T.R."/>
            <person name="Gojobori T."/>
            <person name="Green R.E."/>
            <person name="Gustincich S."/>
            <person name="Harbers M."/>
            <person name="Hayashi Y."/>
            <person name="Hensch T.K."/>
            <person name="Hirokawa N."/>
            <person name="Hill D."/>
            <person name="Huminiecki L."/>
            <person name="Iacono M."/>
            <person name="Ikeo K."/>
            <person name="Iwama A."/>
            <person name="Ishikawa T."/>
            <person name="Jakt M."/>
            <person name="Kanapin A."/>
            <person name="Katoh M."/>
            <person name="Kawasawa Y."/>
            <person name="Kelso J."/>
            <person name="Kitamura H."/>
            <person name="Kitano H."/>
            <person name="Kollias G."/>
            <person name="Krishnan S.P."/>
            <person name="Kruger A."/>
            <person name="Kummerfeld S.K."/>
            <person name="Kurochkin I.V."/>
            <person name="Lareau L.F."/>
            <person name="Lazarevic D."/>
            <person name="Lipovich L."/>
            <person name="Liu J."/>
            <person name="Liuni S."/>
            <person name="McWilliam S."/>
            <person name="Madan Babu M."/>
            <person name="Madera M."/>
            <person name="Marchionni L."/>
            <person name="Matsuda H."/>
            <person name="Matsuzawa S."/>
            <person name="Miki H."/>
            <person name="Mignone F."/>
            <person name="Miyake S."/>
            <person name="Morris K."/>
            <person name="Mottagui-Tabar S."/>
            <person name="Mulder N."/>
            <person name="Nakano N."/>
            <person name="Nakauchi H."/>
            <person name="Ng P."/>
            <person name="Nilsson R."/>
            <person name="Nishiguchi S."/>
            <person name="Nishikawa S."/>
            <person name="Nori F."/>
            <person name="Ohara O."/>
            <person name="Okazaki Y."/>
            <person name="Orlando V."/>
            <person name="Pang K.C."/>
            <person name="Pavan W.J."/>
            <person name="Pavesi G."/>
            <person name="Pesole G."/>
            <person name="Petrovsky N."/>
            <person name="Piazza S."/>
            <person name="Reed J."/>
            <person name="Reid J.F."/>
            <person name="Ring B.Z."/>
            <person name="Ringwald M."/>
            <person name="Rost B."/>
            <person name="Ruan Y."/>
            <person name="Salzberg S.L."/>
            <person name="Sandelin A."/>
            <person name="Schneider C."/>
            <person name="Schoenbach C."/>
            <person name="Sekiguchi K."/>
            <person name="Semple C.A."/>
            <person name="Seno S."/>
            <person name="Sessa L."/>
            <person name="Sheng Y."/>
            <person name="Shibata Y."/>
            <person name="Shimada H."/>
            <person name="Shimada K."/>
            <person name="Silva D."/>
            <person name="Sinclair B."/>
            <person name="Sperling S."/>
            <person name="Stupka E."/>
            <person name="Sugiura K."/>
            <person name="Sultana R."/>
            <person name="Takenaka Y."/>
            <person name="Taki K."/>
            <person name="Tammoja K."/>
            <person name="Tan S.L."/>
            <person name="Tang S."/>
            <person name="Taylor M.S."/>
            <person name="Tegner J."/>
            <person name="Teichmann S.A."/>
            <person name="Ueda H.R."/>
            <person name="van Nimwegen E."/>
            <person name="Verardo R."/>
            <person name="Wei C.L."/>
            <person name="Yagi K."/>
            <person name="Yamanishi H."/>
            <person name="Zabarovsky E."/>
            <person name="Zhu S."/>
            <person name="Zimmer A."/>
            <person name="Hide W."/>
            <person name="Bult C."/>
            <person name="Grimmond S.M."/>
            <person name="Teasdale R.D."/>
            <person name="Liu E.T."/>
            <person name="Brusic V."/>
            <person name="Quackenbush J."/>
            <person name="Wahlestedt C."/>
            <person name="Mattick J.S."/>
            <person name="Hume D.A."/>
            <person name="Kai C."/>
            <person name="Sasaki D."/>
            <person name="Tomaru Y."/>
            <person name="Fukuda S."/>
            <person name="Kanamori-Katayama M."/>
            <person name="Suzuki M."/>
            <person name="Aoki J."/>
            <person name="Arakawa T."/>
            <person name="Iida J."/>
            <person name="Imamura K."/>
            <person name="Itoh M."/>
            <person name="Kato T."/>
            <person name="Kawaji H."/>
            <person name="Kawagashira N."/>
            <person name="Kawashima T."/>
            <person name="Kojima M."/>
            <person name="Kondo S."/>
            <person name="Konno H."/>
            <person name="Nakano K."/>
            <person name="Ninomiya N."/>
            <person name="Nishio T."/>
            <person name="Okada M."/>
            <person name="Plessy C."/>
            <person name="Shibata K."/>
            <person name="Shiraki T."/>
            <person name="Suzuki S."/>
            <person name="Tagami M."/>
            <person name="Waki K."/>
            <person name="Watahiki A."/>
            <person name="Okamura-Oho Y."/>
            <person name="Suzuki H."/>
            <person name="Kawai J."/>
            <person name="Hayashizaki Y."/>
        </authorList>
    </citation>
    <scope>NUCLEOTIDE SEQUENCE [LARGE SCALE MRNA]</scope>
    <source>
        <strain>C57BL/6J</strain>
        <strain>NOD</strain>
        <tissue>Bone marrow</tissue>
        <tissue>Forelimb</tissue>
        <tissue>Thymus</tissue>
    </source>
</reference>
<reference key="3">
    <citation type="journal article" date="2009" name="PLoS Biol.">
        <title>Lineage-specific biology revealed by a finished genome assembly of the mouse.</title>
        <authorList>
            <person name="Church D.M."/>
            <person name="Goodstadt L."/>
            <person name="Hillier L.W."/>
            <person name="Zody M.C."/>
            <person name="Goldstein S."/>
            <person name="She X."/>
            <person name="Bult C.J."/>
            <person name="Agarwala R."/>
            <person name="Cherry J.L."/>
            <person name="DiCuccio M."/>
            <person name="Hlavina W."/>
            <person name="Kapustin Y."/>
            <person name="Meric P."/>
            <person name="Maglott D."/>
            <person name="Birtle Z."/>
            <person name="Marques A.C."/>
            <person name="Graves T."/>
            <person name="Zhou S."/>
            <person name="Teague B."/>
            <person name="Potamousis K."/>
            <person name="Churas C."/>
            <person name="Place M."/>
            <person name="Herschleb J."/>
            <person name="Runnheim R."/>
            <person name="Forrest D."/>
            <person name="Amos-Landgraf J."/>
            <person name="Schwartz D.C."/>
            <person name="Cheng Z."/>
            <person name="Lindblad-Toh K."/>
            <person name="Eichler E.E."/>
            <person name="Ponting C.P."/>
        </authorList>
    </citation>
    <scope>NUCLEOTIDE SEQUENCE [LARGE SCALE GENOMIC DNA]</scope>
    <source>
        <strain>C57BL/6J</strain>
    </source>
</reference>
<reference key="4">
    <citation type="journal article" date="2004" name="Genome Res.">
        <title>The status, quality, and expansion of the NIH full-length cDNA project: the Mammalian Gene Collection (MGC).</title>
        <authorList>
            <consortium name="The MGC Project Team"/>
        </authorList>
    </citation>
    <scope>NUCLEOTIDE SEQUENCE [LARGE SCALE MRNA]</scope>
    <source>
        <strain>FVB/N</strain>
        <tissue>Mammary tumor</tissue>
    </source>
</reference>
<reference key="5">
    <citation type="journal article" date="1992" name="Kidney Int.">
        <title>Moesin, a new cytoskeletal protein and constituent of filopodia: its role in cellular functions.</title>
        <authorList>
            <person name="Furthmayr H."/>
            <person name="Lankes W.T."/>
            <person name="Amieva M.R."/>
        </authorList>
    </citation>
    <scope>NUCLEOTIDE SEQUENCE [MRNA] OF 12-577</scope>
</reference>
<reference key="6">
    <citation type="journal article" date="1998" name="J. Biol. Chem.">
        <title>Phosphorylation of moesin by rho-associated kinase (Rho-kinase) plays a crucial role in the formation of microvilli-like structures.</title>
        <authorList>
            <person name="Oshiro N."/>
            <person name="Fukata Y."/>
            <person name="Kaibuchi K."/>
        </authorList>
    </citation>
    <scope>PHOSPHORYLATION AT THR-558</scope>
    <scope>SUBCELLULAR LOCATION</scope>
    <scope>MUTAGENESIS OF THR-558</scope>
</reference>
<reference key="7">
    <citation type="journal article" date="1998" name="J. Cell Biol.">
        <title>Rho-kinase phosphorylates COOH-terminal threonines of ezrin/radixin/moesin (ERM) proteins and regulates their head-to-tail association.</title>
        <authorList>
            <person name="Matsui T."/>
            <person name="Maeda M."/>
            <person name="Doi Y."/>
            <person name="Yonemura S."/>
            <person name="Amano M."/>
            <person name="Kaibuchi K."/>
            <person name="Tsukita S."/>
            <person name="Tsukita S."/>
        </authorList>
    </citation>
    <scope>PHOSPHORYLATION AT THR-558</scope>
    <scope>ACTIVITY REGULATION</scope>
</reference>
<reference key="8">
    <citation type="journal article" date="1998" name="J. Cell Biol.">
        <title>Ezrin/radixin/moesin (ERM) proteins bind to a positively charged amino acid cluster in the juxta-membrane cytoplasmic domain of CD44, CD43, and ICAM-2.</title>
        <authorList>
            <person name="Yonemura S."/>
            <person name="Hirao M."/>
            <person name="Doi Y."/>
            <person name="Takahashi N."/>
            <person name="Kondo T."/>
            <person name="Tsukita S."/>
            <person name="Tsukita S."/>
        </authorList>
    </citation>
    <scope>INTERACTION WITH SPN/CD43 CYTOPLASMIC TAIL; CD44 AND ICAM2</scope>
    <scope>SUBCELLULAR LOCATION</scope>
</reference>
<reference key="9">
    <citation type="journal article" date="1999" name="J. Biol. Chem.">
        <title>Normal development of mice and unimpaired cell adhesion/cell motility/actin-based cytoskeleton without compensatory up-regulation of ezrin or radixin in moesin gene knockout.</title>
        <authorList>
            <person name="Doi Y."/>
            <person name="Itoh M."/>
            <person name="Yonemura S."/>
            <person name="Ishihara S."/>
            <person name="Takano H."/>
            <person name="Noda T."/>
            <person name="Tsukita S."/>
        </authorList>
    </citation>
    <scope>DISRUPTION PHENOTYPE</scope>
</reference>
<reference key="10">
    <citation type="journal article" date="2002" name="J. Immunol.">
        <title>Negative regulation of immune synapse formation by anchoring lipid raft to cytoskeleton through Cbp-EBP50-ERM assembly.</title>
        <authorList>
            <person name="Itoh K."/>
            <person name="Sakakibara M."/>
            <person name="Yamasaki S."/>
            <person name="Takeuchi A."/>
            <person name="Arase H."/>
            <person name="Miyazaki M."/>
            <person name="Nakajima N."/>
            <person name="Okada M."/>
            <person name="Saito T."/>
        </authorList>
    </citation>
    <scope>IDENTIFICATION IN A COMPLEX WITH NHERF1 AND PAG1</scope>
</reference>
<reference key="11">
    <citation type="journal article" date="2007" name="J. Immunol.">
        <title>Quantitative time-resolved phosphoproteomic analysis of mast cell signaling.</title>
        <authorList>
            <person name="Cao L."/>
            <person name="Yu K."/>
            <person name="Banh C."/>
            <person name="Nguyen V."/>
            <person name="Ritz A."/>
            <person name="Raphael B.J."/>
            <person name="Kawakami Y."/>
            <person name="Kawakami T."/>
            <person name="Salomon A.R."/>
        </authorList>
    </citation>
    <scope>PHOSPHORYLATION [LARGE SCALE ANALYSIS] AT TYR-116</scope>
    <scope>IDENTIFICATION BY MASS SPECTROMETRY [LARGE SCALE ANALYSIS]</scope>
    <source>
        <tissue>Mast cell</tissue>
    </source>
</reference>
<reference key="12">
    <citation type="journal article" date="2010" name="Cell">
        <title>A tissue-specific atlas of mouse protein phosphorylation and expression.</title>
        <authorList>
            <person name="Huttlin E.L."/>
            <person name="Jedrychowski M.P."/>
            <person name="Elias J.E."/>
            <person name="Goswami T."/>
            <person name="Rad R."/>
            <person name="Beausoleil S.A."/>
            <person name="Villen J."/>
            <person name="Haas W."/>
            <person name="Sowa M.E."/>
            <person name="Gygi S.P."/>
        </authorList>
    </citation>
    <scope>PHOSPHORYLATION [LARGE SCALE ANALYSIS] AT SER-527</scope>
    <scope>IDENTIFICATION BY MASS SPECTROMETRY [LARGE SCALE ANALYSIS]</scope>
    <source>
        <tissue>Brain</tissue>
        <tissue>Brown adipose tissue</tissue>
        <tissue>Heart</tissue>
        <tissue>Kidney</tissue>
        <tissue>Liver</tissue>
        <tissue>Lung</tissue>
        <tissue>Pancreas</tissue>
        <tissue>Spleen</tissue>
        <tissue>Testis</tissue>
    </source>
</reference>
<reference key="13">
    <citation type="journal article" date="2012" name="Int. Immunol.">
        <title>Moesin-deficient mice reveal a non-redundant role for moesin in lymphocyte homeostasis.</title>
        <authorList>
            <person name="Hirata T."/>
            <person name="Nomachi A."/>
            <person name="Tohya K."/>
            <person name="Miyasaka M."/>
            <person name="Tsukita S."/>
            <person name="Watanabe T."/>
            <person name="Narumiya S."/>
        </authorList>
    </citation>
    <scope>FUNCTION</scope>
    <scope>DISRUPTION PHENOTYPE</scope>
</reference>
<reference key="14">
    <citation type="journal article" date="2013" name="Mol. Cell">
        <title>SIRT5-mediated lysine desuccinylation impacts diverse metabolic pathways.</title>
        <authorList>
            <person name="Park J."/>
            <person name="Chen Y."/>
            <person name="Tishkoff D.X."/>
            <person name="Peng C."/>
            <person name="Tan M."/>
            <person name="Dai L."/>
            <person name="Xie Z."/>
            <person name="Zhang Y."/>
            <person name="Zwaans B.M."/>
            <person name="Skinner M.E."/>
            <person name="Lombard D.B."/>
            <person name="Zhao Y."/>
        </authorList>
    </citation>
    <scope>ACETYLATION [LARGE SCALE ANALYSIS] AT LYS-165</scope>
    <scope>IDENTIFICATION BY MASS SPECTROMETRY [LARGE SCALE ANALYSIS]</scope>
    <source>
        <tissue>Embryonic fibroblast</tissue>
    </source>
</reference>
<reference key="15">
    <citation type="journal article" date="2017" name="J. Immunol.">
        <title>The ERM Protein Moesin Regulates CD8+ Regulatory T Cell Homeostasis and Self-Tolerance.</title>
        <authorList>
            <person name="Satooka H."/>
            <person name="Nagakubo D."/>
            <person name="Sato T."/>
            <person name="Hirata T."/>
        </authorList>
    </citation>
    <scope>FUNCTION</scope>
    <scope>DISRUPTION PHENOTYPE</scope>
</reference>
<reference key="16">
    <citation type="journal article" date="2018" name="Biochem. Biophys. Res. Commun.">
        <title>Moesin and myosin IIA modulate phagolysosomal biogenesis in macrophages.</title>
        <authorList>
            <person name="Gomez C.P."/>
            <person name="Descoteaux A."/>
        </authorList>
    </citation>
    <scope>FUNCTION</scope>
    <scope>INTERACTION WITH PTPN6</scope>
</reference>
<gene>
    <name evidence="16" type="primary">Msn</name>
</gene>
<sequence length="577" mass="67767">MPKTISVRVTTMDAELEFAIQPNTTGKQLFDQVVKTIGLREVWFFGLQYQDTKAFSTWLKLNKKVTAQDVRKESPLLFKFRAKFYPEDVSEELIQDITQRLFFLQVKEGILNDDIYCPPETAVLLASYAVQSKYGDFNKEVHKSGYLAGDKLLPQRVLEQHKLNKDQWEERIQVWHEEHRGMLREDAVLEYLKIAQDLEMYGVNYFSIKNKKGSELWLGVDALGLNIYEQNDRLTPKIGFPWSEIRNISFNDKKFVIKPIDKKAPDFVFYAPRLRINKRILALCMGNHELYMRRRKPDTIEVQQMKAQAREEKHQKQMERALLENEKKKRELAEKEKEKIEREKEELMEKLKQIEEQTKKAQQELEEQTRRALELEQERKRAQSEAEKLAKERQEAEEAKEALLQASRDQKKTQEQLASEMAELTARISQLEMARKKKESEAVEWQQKAQMVQEDLEKTRAELKTAMSTPHVAEPAENEHDEQDENGAEASAELRADAMAKDRSEEERTTEAEKNERVQKHLKALTSELANARDESKKTANDMIHAENMRLGRDKYKTLRQIRQGNTKQRIDEFESM</sequence>